<accession>Q7RY59</accession>
<proteinExistence type="inferred from homology"/>
<sequence length="515" mass="56725">MSTKRRKTSDEPSALKKAAAPSAPELKKEKKVKDKSTKDKSSTKKTEKTEKKQDAPEPAEESTPATNSTEEDSVTLDVAPEQEEVETVKKTFKDLGIVDALCEACERLGYKNPTPIQEQSIPLALQNRDIIGIAETGSGKTAAFALPILQALLDKPAPLFALVLAPTRELAAQIAQAFEALGSLISLRCALILGGMDMVTQAIALGKKPHVIVATPGRLLDHLEKTKGFSLRSMQYLVMDEADRLLDMDFGPILEKILKFLPRERRTFLFSATMSSKVESLQRASLRDPLKVSVSSNKYATVSTLKSNYVFIPHMHKDTYLVYLCNEFAGQTIIIFTRTVLETQRIAILLRTLGMGAIPLHGGLSQSARLGALNKFRAGSREILVATDVAARGLDIPNVDCVINHDLPQDSKTYVHRVGRTARAGKSGHAISIVTQYDLEIWLRIEAALGHKLDEYPLEKDEVMVFKPRVEEAQRHARNEMKSLMENQGKHGGLLKRKRGNGQGGGRDHMDAEEG</sequence>
<name>RRP3_NEUCR</name>
<evidence type="ECO:0000250" key="1"/>
<evidence type="ECO:0000255" key="2">
    <source>
        <dbReference type="PROSITE-ProRule" id="PRU00541"/>
    </source>
</evidence>
<evidence type="ECO:0000255" key="3">
    <source>
        <dbReference type="PROSITE-ProRule" id="PRU00542"/>
    </source>
</evidence>
<evidence type="ECO:0000256" key="4">
    <source>
        <dbReference type="SAM" id="MobiDB-lite"/>
    </source>
</evidence>
<evidence type="ECO:0000305" key="5"/>
<dbReference type="EC" id="3.6.4.-"/>
<dbReference type="EMBL" id="CM002239">
    <property type="protein sequence ID" value="EAA27679.1"/>
    <property type="molecule type" value="Genomic_DNA"/>
</dbReference>
<dbReference type="RefSeq" id="XP_956915.1">
    <property type="nucleotide sequence ID" value="XM_951822.2"/>
</dbReference>
<dbReference type="SMR" id="Q7RY59"/>
<dbReference type="FunCoup" id="Q7RY59">
    <property type="interactions" value="1089"/>
</dbReference>
<dbReference type="STRING" id="367110.Q7RY59"/>
<dbReference type="PaxDb" id="5141-EFNCRP00000005196"/>
<dbReference type="EnsemblFungi" id="EAA27679">
    <property type="protein sequence ID" value="EAA27679"/>
    <property type="gene ID" value="NCU04504"/>
</dbReference>
<dbReference type="GeneID" id="3873086"/>
<dbReference type="KEGG" id="ncr:NCU04504"/>
<dbReference type="VEuPathDB" id="FungiDB:NCU04504"/>
<dbReference type="HOGENOM" id="CLU_003041_1_1_1"/>
<dbReference type="InParanoid" id="Q7RY59"/>
<dbReference type="OMA" id="GIGIKCC"/>
<dbReference type="OrthoDB" id="10261904at2759"/>
<dbReference type="Proteomes" id="UP000001805">
    <property type="component" value="Chromosome 4, Linkage Group IV"/>
</dbReference>
<dbReference type="GO" id="GO:0005634">
    <property type="term" value="C:nucleus"/>
    <property type="evidence" value="ECO:0000318"/>
    <property type="project" value="GO_Central"/>
</dbReference>
<dbReference type="GO" id="GO:0005524">
    <property type="term" value="F:ATP binding"/>
    <property type="evidence" value="ECO:0007669"/>
    <property type="project" value="UniProtKB-KW"/>
</dbReference>
<dbReference type="GO" id="GO:0016787">
    <property type="term" value="F:hydrolase activity"/>
    <property type="evidence" value="ECO:0007669"/>
    <property type="project" value="UniProtKB-KW"/>
</dbReference>
<dbReference type="GO" id="GO:0003723">
    <property type="term" value="F:RNA binding"/>
    <property type="evidence" value="ECO:0007669"/>
    <property type="project" value="UniProtKB-KW"/>
</dbReference>
<dbReference type="GO" id="GO:0003724">
    <property type="term" value="F:RNA helicase activity"/>
    <property type="evidence" value="ECO:0007669"/>
    <property type="project" value="InterPro"/>
</dbReference>
<dbReference type="GO" id="GO:0006364">
    <property type="term" value="P:rRNA processing"/>
    <property type="evidence" value="ECO:0000318"/>
    <property type="project" value="GO_Central"/>
</dbReference>
<dbReference type="CDD" id="cd17954">
    <property type="entry name" value="DEADc_DDX47"/>
    <property type="match status" value="1"/>
</dbReference>
<dbReference type="CDD" id="cd18787">
    <property type="entry name" value="SF2_C_DEAD"/>
    <property type="match status" value="1"/>
</dbReference>
<dbReference type="Gene3D" id="3.40.50.300">
    <property type="entry name" value="P-loop containing nucleotide triphosphate hydrolases"/>
    <property type="match status" value="2"/>
</dbReference>
<dbReference type="InterPro" id="IPR044765">
    <property type="entry name" value="DDX47/Rrp3_DEADc"/>
</dbReference>
<dbReference type="InterPro" id="IPR011545">
    <property type="entry name" value="DEAD/DEAH_box_helicase_dom"/>
</dbReference>
<dbReference type="InterPro" id="IPR050079">
    <property type="entry name" value="DEAD_box_RNA_helicase"/>
</dbReference>
<dbReference type="InterPro" id="IPR014001">
    <property type="entry name" value="Helicase_ATP-bd"/>
</dbReference>
<dbReference type="InterPro" id="IPR001650">
    <property type="entry name" value="Helicase_C-like"/>
</dbReference>
<dbReference type="InterPro" id="IPR027417">
    <property type="entry name" value="P-loop_NTPase"/>
</dbReference>
<dbReference type="InterPro" id="IPR000629">
    <property type="entry name" value="RNA-helicase_DEAD-box_CS"/>
</dbReference>
<dbReference type="InterPro" id="IPR014014">
    <property type="entry name" value="RNA_helicase_DEAD_Q_motif"/>
</dbReference>
<dbReference type="PANTHER" id="PTHR47959">
    <property type="entry name" value="ATP-DEPENDENT RNA HELICASE RHLE-RELATED"/>
    <property type="match status" value="1"/>
</dbReference>
<dbReference type="PANTHER" id="PTHR47959:SF20">
    <property type="entry name" value="RNA HELICASE"/>
    <property type="match status" value="1"/>
</dbReference>
<dbReference type="Pfam" id="PF00270">
    <property type="entry name" value="DEAD"/>
    <property type="match status" value="1"/>
</dbReference>
<dbReference type="Pfam" id="PF00271">
    <property type="entry name" value="Helicase_C"/>
    <property type="match status" value="1"/>
</dbReference>
<dbReference type="SMART" id="SM00487">
    <property type="entry name" value="DEXDc"/>
    <property type="match status" value="1"/>
</dbReference>
<dbReference type="SMART" id="SM00490">
    <property type="entry name" value="HELICc"/>
    <property type="match status" value="1"/>
</dbReference>
<dbReference type="SUPFAM" id="SSF52540">
    <property type="entry name" value="P-loop containing nucleoside triphosphate hydrolases"/>
    <property type="match status" value="1"/>
</dbReference>
<dbReference type="PROSITE" id="PS00039">
    <property type="entry name" value="DEAD_ATP_HELICASE"/>
    <property type="match status" value="1"/>
</dbReference>
<dbReference type="PROSITE" id="PS51192">
    <property type="entry name" value="HELICASE_ATP_BIND_1"/>
    <property type="match status" value="1"/>
</dbReference>
<dbReference type="PROSITE" id="PS51194">
    <property type="entry name" value="HELICASE_CTER"/>
    <property type="match status" value="1"/>
</dbReference>
<dbReference type="PROSITE" id="PS51195">
    <property type="entry name" value="Q_MOTIF"/>
    <property type="match status" value="1"/>
</dbReference>
<protein>
    <recommendedName>
        <fullName>ATP-dependent rRNA helicase rrp-3</fullName>
        <ecNumber>3.6.4.-</ecNumber>
    </recommendedName>
</protein>
<comment type="function">
    <text evidence="1">Required for pre-ribosomal RNA processing. Involved in the maturation of the 35S-pre-rRNA and to its cleavage to mature 18S rRNA (By similarity).</text>
</comment>
<comment type="subcellular location">
    <subcellularLocation>
        <location evidence="5">Nucleus</location>
    </subcellularLocation>
</comment>
<comment type="domain">
    <text>The Q motif is unique to and characteristic of the DEAD box family of RNA helicases and controls ATP binding and hydrolysis.</text>
</comment>
<comment type="similarity">
    <text evidence="5">Belongs to the DEAD box helicase family. DDX47/RRP3 subfamily.</text>
</comment>
<organism>
    <name type="scientific">Neurospora crassa (strain ATCC 24698 / 74-OR23-1A / CBS 708.71 / DSM 1257 / FGSC 987)</name>
    <dbReference type="NCBI Taxonomy" id="367110"/>
    <lineage>
        <taxon>Eukaryota</taxon>
        <taxon>Fungi</taxon>
        <taxon>Dikarya</taxon>
        <taxon>Ascomycota</taxon>
        <taxon>Pezizomycotina</taxon>
        <taxon>Sordariomycetes</taxon>
        <taxon>Sordariomycetidae</taxon>
        <taxon>Sordariales</taxon>
        <taxon>Sordariaceae</taxon>
        <taxon>Neurospora</taxon>
    </lineage>
</organism>
<reference key="1">
    <citation type="journal article" date="2003" name="Nature">
        <title>The genome sequence of the filamentous fungus Neurospora crassa.</title>
        <authorList>
            <person name="Galagan J.E."/>
            <person name="Calvo S.E."/>
            <person name="Borkovich K.A."/>
            <person name="Selker E.U."/>
            <person name="Read N.D."/>
            <person name="Jaffe D.B."/>
            <person name="FitzHugh W."/>
            <person name="Ma L.-J."/>
            <person name="Smirnov S."/>
            <person name="Purcell S."/>
            <person name="Rehman B."/>
            <person name="Elkins T."/>
            <person name="Engels R."/>
            <person name="Wang S."/>
            <person name="Nielsen C.B."/>
            <person name="Butler J."/>
            <person name="Endrizzi M."/>
            <person name="Qui D."/>
            <person name="Ianakiev P."/>
            <person name="Bell-Pedersen D."/>
            <person name="Nelson M.A."/>
            <person name="Werner-Washburne M."/>
            <person name="Selitrennikoff C.P."/>
            <person name="Kinsey J.A."/>
            <person name="Braun E.L."/>
            <person name="Zelter A."/>
            <person name="Schulte U."/>
            <person name="Kothe G.O."/>
            <person name="Jedd G."/>
            <person name="Mewes H.-W."/>
            <person name="Staben C."/>
            <person name="Marcotte E."/>
            <person name="Greenberg D."/>
            <person name="Roy A."/>
            <person name="Foley K."/>
            <person name="Naylor J."/>
            <person name="Stange-Thomann N."/>
            <person name="Barrett R."/>
            <person name="Gnerre S."/>
            <person name="Kamal M."/>
            <person name="Kamvysselis M."/>
            <person name="Mauceli E.W."/>
            <person name="Bielke C."/>
            <person name="Rudd S."/>
            <person name="Frishman D."/>
            <person name="Krystofova S."/>
            <person name="Rasmussen C."/>
            <person name="Metzenberg R.L."/>
            <person name="Perkins D.D."/>
            <person name="Kroken S."/>
            <person name="Cogoni C."/>
            <person name="Macino G."/>
            <person name="Catcheside D.E.A."/>
            <person name="Li W."/>
            <person name="Pratt R.J."/>
            <person name="Osmani S.A."/>
            <person name="DeSouza C.P.C."/>
            <person name="Glass N.L."/>
            <person name="Orbach M.J."/>
            <person name="Berglund J.A."/>
            <person name="Voelker R."/>
            <person name="Yarden O."/>
            <person name="Plamann M."/>
            <person name="Seiler S."/>
            <person name="Dunlap J.C."/>
            <person name="Radford A."/>
            <person name="Aramayo R."/>
            <person name="Natvig D.O."/>
            <person name="Alex L.A."/>
            <person name="Mannhaupt G."/>
            <person name="Ebbole D.J."/>
            <person name="Freitag M."/>
            <person name="Paulsen I."/>
            <person name="Sachs M.S."/>
            <person name="Lander E.S."/>
            <person name="Nusbaum C."/>
            <person name="Birren B.W."/>
        </authorList>
    </citation>
    <scope>NUCLEOTIDE SEQUENCE [LARGE SCALE GENOMIC DNA]</scope>
    <source>
        <strain>ATCC 24698 / 74-OR23-1A / CBS 708.71 / DSM 1257 / FGSC 987</strain>
    </source>
</reference>
<keyword id="KW-0067">ATP-binding</keyword>
<keyword id="KW-0347">Helicase</keyword>
<keyword id="KW-0378">Hydrolase</keyword>
<keyword id="KW-0547">Nucleotide-binding</keyword>
<keyword id="KW-0539">Nucleus</keyword>
<keyword id="KW-1185">Reference proteome</keyword>
<keyword id="KW-0690">Ribosome biogenesis</keyword>
<keyword id="KW-0694">RNA-binding</keyword>
<keyword id="KW-0698">rRNA processing</keyword>
<feature type="chain" id="PRO_0000232277" description="ATP-dependent rRNA helicase rrp-3">
    <location>
        <begin position="1"/>
        <end position="515"/>
    </location>
</feature>
<feature type="domain" description="Helicase ATP-binding" evidence="2">
    <location>
        <begin position="121"/>
        <end position="292"/>
    </location>
</feature>
<feature type="domain" description="Helicase C-terminal" evidence="3">
    <location>
        <begin position="316"/>
        <end position="464"/>
    </location>
</feature>
<feature type="region of interest" description="Disordered" evidence="4">
    <location>
        <begin position="1"/>
        <end position="85"/>
    </location>
</feature>
<feature type="region of interest" description="Disordered" evidence="4">
    <location>
        <begin position="482"/>
        <end position="515"/>
    </location>
</feature>
<feature type="short sequence motif" description="Q motif">
    <location>
        <begin position="90"/>
        <end position="118"/>
    </location>
</feature>
<feature type="short sequence motif" description="DEAD box">
    <location>
        <begin position="240"/>
        <end position="243"/>
    </location>
</feature>
<feature type="compositionally biased region" description="Low complexity" evidence="4">
    <location>
        <begin position="15"/>
        <end position="24"/>
    </location>
</feature>
<feature type="compositionally biased region" description="Basic and acidic residues" evidence="4">
    <location>
        <begin position="25"/>
        <end position="55"/>
    </location>
</feature>
<feature type="compositionally biased region" description="Acidic residues" evidence="4">
    <location>
        <begin position="69"/>
        <end position="85"/>
    </location>
</feature>
<feature type="compositionally biased region" description="Basic and acidic residues" evidence="4">
    <location>
        <begin position="506"/>
        <end position="515"/>
    </location>
</feature>
<feature type="binding site" evidence="2">
    <location>
        <begin position="134"/>
        <end position="141"/>
    </location>
    <ligand>
        <name>ATP</name>
        <dbReference type="ChEBI" id="CHEBI:30616"/>
    </ligand>
</feature>
<gene>
    <name type="primary">rrp-3</name>
    <name type="ORF">NCU04504</name>
</gene>